<feature type="chain" id="PRO_1000100626" description="Adenylate kinase">
    <location>
        <begin position="1"/>
        <end position="213"/>
    </location>
</feature>
<feature type="region of interest" description="NMP" evidence="1">
    <location>
        <begin position="30"/>
        <end position="59"/>
    </location>
</feature>
<feature type="region of interest" description="LID" evidence="1">
    <location>
        <begin position="125"/>
        <end position="160"/>
    </location>
</feature>
<feature type="binding site" evidence="1">
    <location>
        <begin position="10"/>
        <end position="15"/>
    </location>
    <ligand>
        <name>ATP</name>
        <dbReference type="ChEBI" id="CHEBI:30616"/>
    </ligand>
</feature>
<feature type="binding site" evidence="1">
    <location>
        <position position="36"/>
    </location>
    <ligand>
        <name>AMP</name>
        <dbReference type="ChEBI" id="CHEBI:456215"/>
    </ligand>
</feature>
<feature type="binding site" evidence="1">
    <location>
        <begin position="57"/>
        <end position="59"/>
    </location>
    <ligand>
        <name>AMP</name>
        <dbReference type="ChEBI" id="CHEBI:456215"/>
    </ligand>
</feature>
<feature type="binding site" evidence="1">
    <location>
        <begin position="83"/>
        <end position="86"/>
    </location>
    <ligand>
        <name>AMP</name>
        <dbReference type="ChEBI" id="CHEBI:456215"/>
    </ligand>
</feature>
<feature type="binding site" evidence="1">
    <location>
        <position position="90"/>
    </location>
    <ligand>
        <name>AMP</name>
        <dbReference type="ChEBI" id="CHEBI:456215"/>
    </ligand>
</feature>
<feature type="binding site" evidence="1">
    <location>
        <position position="126"/>
    </location>
    <ligand>
        <name>ATP</name>
        <dbReference type="ChEBI" id="CHEBI:30616"/>
    </ligand>
</feature>
<feature type="binding site" evidence="1">
    <location>
        <position position="129"/>
    </location>
    <ligand>
        <name>Zn(2+)</name>
        <dbReference type="ChEBI" id="CHEBI:29105"/>
        <note>structural</note>
    </ligand>
</feature>
<feature type="binding site" evidence="1">
    <location>
        <position position="132"/>
    </location>
    <ligand>
        <name>Zn(2+)</name>
        <dbReference type="ChEBI" id="CHEBI:29105"/>
        <note>structural</note>
    </ligand>
</feature>
<feature type="binding site" evidence="1">
    <location>
        <begin position="135"/>
        <end position="136"/>
    </location>
    <ligand>
        <name>ATP</name>
        <dbReference type="ChEBI" id="CHEBI:30616"/>
    </ligand>
</feature>
<feature type="binding site" evidence="1">
    <location>
        <position position="146"/>
    </location>
    <ligand>
        <name>Zn(2+)</name>
        <dbReference type="ChEBI" id="CHEBI:29105"/>
        <note>structural</note>
    </ligand>
</feature>
<feature type="binding site" evidence="1">
    <location>
        <position position="149"/>
    </location>
    <ligand>
        <name>Zn(2+)</name>
        <dbReference type="ChEBI" id="CHEBI:29105"/>
        <note>structural</note>
    </ligand>
</feature>
<feature type="binding site" evidence="1">
    <location>
        <position position="157"/>
    </location>
    <ligand>
        <name>AMP</name>
        <dbReference type="ChEBI" id="CHEBI:456215"/>
    </ligand>
</feature>
<feature type="binding site" evidence="1">
    <location>
        <position position="169"/>
    </location>
    <ligand>
        <name>AMP</name>
        <dbReference type="ChEBI" id="CHEBI:456215"/>
    </ligand>
</feature>
<feature type="binding site" evidence="1">
    <location>
        <position position="195"/>
    </location>
    <ligand>
        <name>ATP</name>
        <dbReference type="ChEBI" id="CHEBI:30616"/>
    </ligand>
</feature>
<evidence type="ECO:0000255" key="1">
    <source>
        <dbReference type="HAMAP-Rule" id="MF_00235"/>
    </source>
</evidence>
<organism>
    <name type="scientific">Wolbachia pipientis subsp. Culex pipiens (strain wPip)</name>
    <dbReference type="NCBI Taxonomy" id="570417"/>
    <lineage>
        <taxon>Bacteria</taxon>
        <taxon>Pseudomonadati</taxon>
        <taxon>Pseudomonadota</taxon>
        <taxon>Alphaproteobacteria</taxon>
        <taxon>Rickettsiales</taxon>
        <taxon>Anaplasmataceae</taxon>
        <taxon>Wolbachieae</taxon>
        <taxon>Wolbachia</taxon>
    </lineage>
</organism>
<keyword id="KW-0067">ATP-binding</keyword>
<keyword id="KW-0963">Cytoplasm</keyword>
<keyword id="KW-0418">Kinase</keyword>
<keyword id="KW-0479">Metal-binding</keyword>
<keyword id="KW-0545">Nucleotide biosynthesis</keyword>
<keyword id="KW-0547">Nucleotide-binding</keyword>
<keyword id="KW-0808">Transferase</keyword>
<keyword id="KW-0862">Zinc</keyword>
<accession>B3CN46</accession>
<comment type="function">
    <text evidence="1">Catalyzes the reversible transfer of the terminal phosphate group between ATP and AMP. Plays an important role in cellular energy homeostasis and in adenine nucleotide metabolism.</text>
</comment>
<comment type="catalytic activity">
    <reaction evidence="1">
        <text>AMP + ATP = 2 ADP</text>
        <dbReference type="Rhea" id="RHEA:12973"/>
        <dbReference type="ChEBI" id="CHEBI:30616"/>
        <dbReference type="ChEBI" id="CHEBI:456215"/>
        <dbReference type="ChEBI" id="CHEBI:456216"/>
        <dbReference type="EC" id="2.7.4.3"/>
    </reaction>
</comment>
<comment type="pathway">
    <text evidence="1">Purine metabolism; AMP biosynthesis via salvage pathway; AMP from ADP: step 1/1.</text>
</comment>
<comment type="subunit">
    <text evidence="1">Monomer.</text>
</comment>
<comment type="subcellular location">
    <subcellularLocation>
        <location evidence="1">Cytoplasm</location>
    </subcellularLocation>
</comment>
<comment type="domain">
    <text evidence="1">Consists of three domains, a large central CORE domain and two small peripheral domains, NMPbind and LID, which undergo movements during catalysis. The LID domain closes over the site of phosphoryl transfer upon ATP binding. Assembling and dissambling the active center during each catalytic cycle provides an effective means to prevent ATP hydrolysis. Some bacteria have evolved a zinc-coordinating structure that stabilizes the LID domain.</text>
</comment>
<comment type="similarity">
    <text evidence="1">Belongs to the adenylate kinase family.</text>
</comment>
<dbReference type="EC" id="2.7.4.3" evidence="1"/>
<dbReference type="EMBL" id="AM999887">
    <property type="protein sequence ID" value="CAQ55294.1"/>
    <property type="molecule type" value="Genomic_DNA"/>
</dbReference>
<dbReference type="RefSeq" id="WP_007302552.1">
    <property type="nucleotide sequence ID" value="NC_010981.1"/>
</dbReference>
<dbReference type="SMR" id="B3CN46"/>
<dbReference type="KEGG" id="wpi:WP1186"/>
<dbReference type="eggNOG" id="COG0563">
    <property type="taxonomic scope" value="Bacteria"/>
</dbReference>
<dbReference type="HOGENOM" id="CLU_032354_1_2_5"/>
<dbReference type="UniPathway" id="UPA00588">
    <property type="reaction ID" value="UER00649"/>
</dbReference>
<dbReference type="Proteomes" id="UP000008814">
    <property type="component" value="Chromosome"/>
</dbReference>
<dbReference type="GO" id="GO:0005737">
    <property type="term" value="C:cytoplasm"/>
    <property type="evidence" value="ECO:0007669"/>
    <property type="project" value="UniProtKB-SubCell"/>
</dbReference>
<dbReference type="GO" id="GO:0004017">
    <property type="term" value="F:adenylate kinase activity"/>
    <property type="evidence" value="ECO:0007669"/>
    <property type="project" value="UniProtKB-UniRule"/>
</dbReference>
<dbReference type="GO" id="GO:0005524">
    <property type="term" value="F:ATP binding"/>
    <property type="evidence" value="ECO:0007669"/>
    <property type="project" value="UniProtKB-UniRule"/>
</dbReference>
<dbReference type="GO" id="GO:0008270">
    <property type="term" value="F:zinc ion binding"/>
    <property type="evidence" value="ECO:0007669"/>
    <property type="project" value="UniProtKB-UniRule"/>
</dbReference>
<dbReference type="GO" id="GO:0044209">
    <property type="term" value="P:AMP salvage"/>
    <property type="evidence" value="ECO:0007669"/>
    <property type="project" value="UniProtKB-UniRule"/>
</dbReference>
<dbReference type="CDD" id="cd01428">
    <property type="entry name" value="ADK"/>
    <property type="match status" value="1"/>
</dbReference>
<dbReference type="Gene3D" id="3.40.50.300">
    <property type="entry name" value="P-loop containing nucleotide triphosphate hydrolases"/>
    <property type="match status" value="1"/>
</dbReference>
<dbReference type="HAMAP" id="MF_00235">
    <property type="entry name" value="Adenylate_kinase_Adk"/>
    <property type="match status" value="1"/>
</dbReference>
<dbReference type="InterPro" id="IPR006259">
    <property type="entry name" value="Adenyl_kin_sub"/>
</dbReference>
<dbReference type="InterPro" id="IPR000850">
    <property type="entry name" value="Adenylat/UMP-CMP_kin"/>
</dbReference>
<dbReference type="InterPro" id="IPR033690">
    <property type="entry name" value="Adenylat_kinase_CS"/>
</dbReference>
<dbReference type="InterPro" id="IPR027417">
    <property type="entry name" value="P-loop_NTPase"/>
</dbReference>
<dbReference type="NCBIfam" id="TIGR01351">
    <property type="entry name" value="adk"/>
    <property type="match status" value="1"/>
</dbReference>
<dbReference type="PANTHER" id="PTHR23359">
    <property type="entry name" value="NUCLEOTIDE KINASE"/>
    <property type="match status" value="1"/>
</dbReference>
<dbReference type="Pfam" id="PF00406">
    <property type="entry name" value="ADK"/>
    <property type="match status" value="1"/>
</dbReference>
<dbReference type="PRINTS" id="PR00094">
    <property type="entry name" value="ADENYLTKNASE"/>
</dbReference>
<dbReference type="SUPFAM" id="SSF52540">
    <property type="entry name" value="P-loop containing nucleoside triphosphate hydrolases"/>
    <property type="match status" value="1"/>
</dbReference>
<dbReference type="PROSITE" id="PS00113">
    <property type="entry name" value="ADENYLATE_KINASE"/>
    <property type="match status" value="1"/>
</dbReference>
<sequence>MIITIFGPPGSGKGTQSSLLIAKYNFKLVSVGDLLRNIISSESKLGKGIKDTVESGNLIQDEVICKLLCDQLALIDGDFLLDGFPRNLNQAHFLTQVLQKRCNRDVDLVIELQLDDNIAIDRLKDRLTCLDCKSIYSISSFKNTTCAKCKSTRLEKRIDDANMLAINKRIREYHSQIEGLREYYKDKLLTINANLSVDRVMQEIESKISCNLI</sequence>
<name>KAD_WOLPP</name>
<reference key="1">
    <citation type="journal article" date="2008" name="Mol. Biol. Evol.">
        <title>Genome evolution of Wolbachia strain wPip from the Culex pipiens group.</title>
        <authorList>
            <person name="Klasson L."/>
            <person name="Walker T."/>
            <person name="Sebaihia M."/>
            <person name="Sanders M.J."/>
            <person name="Quail M.A."/>
            <person name="Lord A."/>
            <person name="Sanders S."/>
            <person name="Earl J."/>
            <person name="O'Neill S.L."/>
            <person name="Thomson N."/>
            <person name="Sinkins S.P."/>
            <person name="Parkhill J."/>
        </authorList>
    </citation>
    <scope>NUCLEOTIDE SEQUENCE [LARGE SCALE GENOMIC DNA]</scope>
    <source>
        <strain>wPip</strain>
    </source>
</reference>
<protein>
    <recommendedName>
        <fullName evidence="1">Adenylate kinase</fullName>
        <shortName evidence="1">AK</shortName>
        <ecNumber evidence="1">2.7.4.3</ecNumber>
    </recommendedName>
    <alternativeName>
        <fullName evidence="1">ATP-AMP transphosphorylase</fullName>
    </alternativeName>
    <alternativeName>
        <fullName evidence="1">ATP:AMP phosphotransferase</fullName>
    </alternativeName>
    <alternativeName>
        <fullName evidence="1">Adenylate monophosphate kinase</fullName>
    </alternativeName>
</protein>
<proteinExistence type="inferred from homology"/>
<gene>
    <name evidence="1" type="primary">adk</name>
    <name type="ordered locus">WP1186</name>
</gene>